<proteinExistence type="inferred from homology"/>
<comment type="function">
    <text evidence="1">Aspartyl-tRNA synthetase with relaxed tRNA specificity since it is able to aspartylate not only its cognate tRNA(Asp) but also tRNA(Asn). Reaction proceeds in two steps: L-aspartate is first activated by ATP to form Asp-AMP and then transferred to the acceptor end of tRNA(Asp/Asn).</text>
</comment>
<comment type="catalytic activity">
    <reaction evidence="1">
        <text>tRNA(Asx) + L-aspartate + ATP = L-aspartyl-tRNA(Asx) + AMP + diphosphate</text>
        <dbReference type="Rhea" id="RHEA:18349"/>
        <dbReference type="Rhea" id="RHEA-COMP:9710"/>
        <dbReference type="Rhea" id="RHEA-COMP:9711"/>
        <dbReference type="ChEBI" id="CHEBI:29991"/>
        <dbReference type="ChEBI" id="CHEBI:30616"/>
        <dbReference type="ChEBI" id="CHEBI:33019"/>
        <dbReference type="ChEBI" id="CHEBI:78442"/>
        <dbReference type="ChEBI" id="CHEBI:78516"/>
        <dbReference type="ChEBI" id="CHEBI:456215"/>
        <dbReference type="EC" id="6.1.1.23"/>
    </reaction>
</comment>
<comment type="subunit">
    <text evidence="1">Homodimer.</text>
</comment>
<comment type="subcellular location">
    <subcellularLocation>
        <location evidence="1">Cytoplasm</location>
    </subcellularLocation>
</comment>
<comment type="similarity">
    <text evidence="1">Belongs to the class-II aminoacyl-tRNA synthetase family. Type 1 subfamily.</text>
</comment>
<dbReference type="EC" id="6.1.1.23" evidence="1"/>
<dbReference type="EMBL" id="CR522870">
    <property type="protein sequence ID" value="CAG35299.1"/>
    <property type="molecule type" value="Genomic_DNA"/>
</dbReference>
<dbReference type="SMR" id="Q6AQS4"/>
<dbReference type="STRING" id="177439.DP0570"/>
<dbReference type="KEGG" id="dps:DP0570"/>
<dbReference type="eggNOG" id="COG0173">
    <property type="taxonomic scope" value="Bacteria"/>
</dbReference>
<dbReference type="HOGENOM" id="CLU_014330_3_2_7"/>
<dbReference type="OrthoDB" id="9802326at2"/>
<dbReference type="Proteomes" id="UP000000602">
    <property type="component" value="Chromosome"/>
</dbReference>
<dbReference type="GO" id="GO:0005737">
    <property type="term" value="C:cytoplasm"/>
    <property type="evidence" value="ECO:0007669"/>
    <property type="project" value="UniProtKB-SubCell"/>
</dbReference>
<dbReference type="GO" id="GO:0004815">
    <property type="term" value="F:aspartate-tRNA ligase activity"/>
    <property type="evidence" value="ECO:0007669"/>
    <property type="project" value="UniProtKB-UniRule"/>
</dbReference>
<dbReference type="GO" id="GO:0050560">
    <property type="term" value="F:aspartate-tRNA(Asn) ligase activity"/>
    <property type="evidence" value="ECO:0007669"/>
    <property type="project" value="UniProtKB-EC"/>
</dbReference>
<dbReference type="GO" id="GO:0005524">
    <property type="term" value="F:ATP binding"/>
    <property type="evidence" value="ECO:0007669"/>
    <property type="project" value="UniProtKB-UniRule"/>
</dbReference>
<dbReference type="GO" id="GO:0003676">
    <property type="term" value="F:nucleic acid binding"/>
    <property type="evidence" value="ECO:0007669"/>
    <property type="project" value="InterPro"/>
</dbReference>
<dbReference type="GO" id="GO:0006422">
    <property type="term" value="P:aspartyl-tRNA aminoacylation"/>
    <property type="evidence" value="ECO:0007669"/>
    <property type="project" value="UniProtKB-UniRule"/>
</dbReference>
<dbReference type="CDD" id="cd00777">
    <property type="entry name" value="AspRS_core"/>
    <property type="match status" value="1"/>
</dbReference>
<dbReference type="CDD" id="cd04317">
    <property type="entry name" value="EcAspRS_like_N"/>
    <property type="match status" value="1"/>
</dbReference>
<dbReference type="Gene3D" id="3.30.930.10">
    <property type="entry name" value="Bira Bifunctional Protein, Domain 2"/>
    <property type="match status" value="1"/>
</dbReference>
<dbReference type="Gene3D" id="3.30.1360.30">
    <property type="entry name" value="GAD-like domain"/>
    <property type="match status" value="1"/>
</dbReference>
<dbReference type="Gene3D" id="2.40.50.140">
    <property type="entry name" value="Nucleic acid-binding proteins"/>
    <property type="match status" value="1"/>
</dbReference>
<dbReference type="HAMAP" id="MF_00044">
    <property type="entry name" value="Asp_tRNA_synth_type1"/>
    <property type="match status" value="1"/>
</dbReference>
<dbReference type="InterPro" id="IPR004364">
    <property type="entry name" value="Aa-tRNA-synt_II"/>
</dbReference>
<dbReference type="InterPro" id="IPR006195">
    <property type="entry name" value="aa-tRNA-synth_II"/>
</dbReference>
<dbReference type="InterPro" id="IPR045864">
    <property type="entry name" value="aa-tRNA-synth_II/BPL/LPL"/>
</dbReference>
<dbReference type="InterPro" id="IPR004524">
    <property type="entry name" value="Asp-tRNA-ligase_1"/>
</dbReference>
<dbReference type="InterPro" id="IPR047089">
    <property type="entry name" value="Asp-tRNA-ligase_1_N"/>
</dbReference>
<dbReference type="InterPro" id="IPR002312">
    <property type="entry name" value="Asp/Asn-tRNA-synth_IIb"/>
</dbReference>
<dbReference type="InterPro" id="IPR047090">
    <property type="entry name" value="AspRS_core"/>
</dbReference>
<dbReference type="InterPro" id="IPR004115">
    <property type="entry name" value="GAD-like_sf"/>
</dbReference>
<dbReference type="InterPro" id="IPR029351">
    <property type="entry name" value="GAD_dom"/>
</dbReference>
<dbReference type="InterPro" id="IPR012340">
    <property type="entry name" value="NA-bd_OB-fold"/>
</dbReference>
<dbReference type="InterPro" id="IPR004365">
    <property type="entry name" value="NA-bd_OB_tRNA"/>
</dbReference>
<dbReference type="NCBIfam" id="TIGR00459">
    <property type="entry name" value="aspS_bact"/>
    <property type="match status" value="1"/>
</dbReference>
<dbReference type="NCBIfam" id="NF001750">
    <property type="entry name" value="PRK00476.1"/>
    <property type="match status" value="1"/>
</dbReference>
<dbReference type="PANTHER" id="PTHR22594:SF5">
    <property type="entry name" value="ASPARTATE--TRNA LIGASE, MITOCHONDRIAL"/>
    <property type="match status" value="1"/>
</dbReference>
<dbReference type="PANTHER" id="PTHR22594">
    <property type="entry name" value="ASPARTYL/LYSYL-TRNA SYNTHETASE"/>
    <property type="match status" value="1"/>
</dbReference>
<dbReference type="Pfam" id="PF02938">
    <property type="entry name" value="GAD"/>
    <property type="match status" value="1"/>
</dbReference>
<dbReference type="Pfam" id="PF00152">
    <property type="entry name" value="tRNA-synt_2"/>
    <property type="match status" value="1"/>
</dbReference>
<dbReference type="Pfam" id="PF01336">
    <property type="entry name" value="tRNA_anti-codon"/>
    <property type="match status" value="1"/>
</dbReference>
<dbReference type="PRINTS" id="PR01042">
    <property type="entry name" value="TRNASYNTHASP"/>
</dbReference>
<dbReference type="SUPFAM" id="SSF55681">
    <property type="entry name" value="Class II aaRS and biotin synthetases"/>
    <property type="match status" value="1"/>
</dbReference>
<dbReference type="SUPFAM" id="SSF55261">
    <property type="entry name" value="GAD domain-like"/>
    <property type="match status" value="1"/>
</dbReference>
<dbReference type="SUPFAM" id="SSF50249">
    <property type="entry name" value="Nucleic acid-binding proteins"/>
    <property type="match status" value="1"/>
</dbReference>
<dbReference type="PROSITE" id="PS50862">
    <property type="entry name" value="AA_TRNA_LIGASE_II"/>
    <property type="match status" value="1"/>
</dbReference>
<protein>
    <recommendedName>
        <fullName evidence="1">Aspartate--tRNA(Asp/Asn) ligase</fullName>
        <ecNumber evidence="1">6.1.1.23</ecNumber>
    </recommendedName>
    <alternativeName>
        <fullName evidence="1">Aspartyl-tRNA synthetase</fullName>
        <shortName evidence="1">AspRS</shortName>
    </alternativeName>
    <alternativeName>
        <fullName evidence="1">Non-discriminating aspartyl-tRNA synthetase</fullName>
        <shortName evidence="1">ND-AspRS</shortName>
    </alternativeName>
</protein>
<keyword id="KW-0030">Aminoacyl-tRNA synthetase</keyword>
<keyword id="KW-0067">ATP-binding</keyword>
<keyword id="KW-0963">Cytoplasm</keyword>
<keyword id="KW-0436">Ligase</keyword>
<keyword id="KW-0547">Nucleotide-binding</keyword>
<keyword id="KW-0648">Protein biosynthesis</keyword>
<keyword id="KW-1185">Reference proteome</keyword>
<name>SYDND_DESPS</name>
<gene>
    <name evidence="1" type="primary">aspS</name>
    <name type="ordered locus">DP0570</name>
</gene>
<reference key="1">
    <citation type="journal article" date="2004" name="Environ. Microbiol.">
        <title>The genome of Desulfotalea psychrophila, a sulfate-reducing bacterium from permanently cold Arctic sediments.</title>
        <authorList>
            <person name="Rabus R."/>
            <person name="Ruepp A."/>
            <person name="Frickey T."/>
            <person name="Rattei T."/>
            <person name="Fartmann B."/>
            <person name="Stark M."/>
            <person name="Bauer M."/>
            <person name="Zibat A."/>
            <person name="Lombardot T."/>
            <person name="Becker I."/>
            <person name="Amann J."/>
            <person name="Gellner K."/>
            <person name="Teeling H."/>
            <person name="Leuschner W.D."/>
            <person name="Gloeckner F.-O."/>
            <person name="Lupas A.N."/>
            <person name="Amann R."/>
            <person name="Klenk H.-P."/>
        </authorList>
    </citation>
    <scope>NUCLEOTIDE SEQUENCE [LARGE SCALE GENOMIC DNA]</scope>
    <source>
        <strain>DSM 12343 / LSv54</strain>
    </source>
</reference>
<feature type="chain" id="PRO_0000110866" description="Aspartate--tRNA(Asp/Asn) ligase">
    <location>
        <begin position="1"/>
        <end position="607"/>
    </location>
</feature>
<feature type="region of interest" description="Aspartate" evidence="1">
    <location>
        <begin position="218"/>
        <end position="221"/>
    </location>
</feature>
<feature type="binding site" evidence="1">
    <location>
        <position position="194"/>
    </location>
    <ligand>
        <name>L-aspartate</name>
        <dbReference type="ChEBI" id="CHEBI:29991"/>
    </ligand>
</feature>
<feature type="binding site" evidence="1">
    <location>
        <begin position="240"/>
        <end position="242"/>
    </location>
    <ligand>
        <name>ATP</name>
        <dbReference type="ChEBI" id="CHEBI:30616"/>
    </ligand>
</feature>
<feature type="binding site" evidence="1">
    <location>
        <position position="240"/>
    </location>
    <ligand>
        <name>L-aspartate</name>
        <dbReference type="ChEBI" id="CHEBI:29991"/>
    </ligand>
</feature>
<feature type="binding site" evidence="1">
    <location>
        <position position="249"/>
    </location>
    <ligand>
        <name>ATP</name>
        <dbReference type="ChEBI" id="CHEBI:30616"/>
    </ligand>
</feature>
<feature type="binding site" evidence="1">
    <location>
        <position position="468"/>
    </location>
    <ligand>
        <name>L-aspartate</name>
        <dbReference type="ChEBI" id="CHEBI:29991"/>
    </ligand>
</feature>
<feature type="binding site" evidence="1">
    <location>
        <position position="502"/>
    </location>
    <ligand>
        <name>ATP</name>
        <dbReference type="ChEBI" id="CHEBI:30616"/>
    </ligand>
</feature>
<feature type="binding site" evidence="1">
    <location>
        <position position="509"/>
    </location>
    <ligand>
        <name>L-aspartate</name>
        <dbReference type="ChEBI" id="CHEBI:29991"/>
    </ligand>
</feature>
<feature type="binding site" evidence="1">
    <location>
        <begin position="554"/>
        <end position="557"/>
    </location>
    <ligand>
        <name>ATP</name>
        <dbReference type="ChEBI" id="CHEBI:30616"/>
    </ligand>
</feature>
<feature type="site" description="Important for tRNA non-discrimination" evidence="1">
    <location>
        <position position="50"/>
    </location>
</feature>
<evidence type="ECO:0000255" key="1">
    <source>
        <dbReference type="HAMAP-Rule" id="MF_00044"/>
    </source>
</evidence>
<accession>Q6AQS4</accession>
<organism>
    <name type="scientific">Desulfotalea psychrophila (strain LSv54 / DSM 12343)</name>
    <dbReference type="NCBI Taxonomy" id="177439"/>
    <lineage>
        <taxon>Bacteria</taxon>
        <taxon>Pseudomonadati</taxon>
        <taxon>Thermodesulfobacteriota</taxon>
        <taxon>Desulfobulbia</taxon>
        <taxon>Desulfobulbales</taxon>
        <taxon>Desulfocapsaceae</taxon>
        <taxon>Desulfotalea</taxon>
    </lineage>
</organism>
<sequence length="607" mass="69037">MSENVKKNWIKTIMESMGSLKRTHFCDALRKEDIGKQVILMGWVLRRRDHGGVIFIDLRDRRGITQVVFNPEINPEVHAKAHSLRSEWVLAIKGTVSARPGDMANTKLGTGDIEILVDELVILNTSETPPFPLDEETEVSENLRLQYRYLDLRRPAMARNLLLRHKAVQAIRNYLNDNEFLDIETPMLTRSTPEGARDYLVPSRVSAGKFYALPQSPQLFKQLLMIAGMDRYYQIVKCFRDEDLRADRQPEFTQIDMELSFVDEEQIIEVTEGMIQTLFKETLDLDLTPPFAHITYADSMERFGCDRPDMRFGMELVNLTEIAKSCSFKVFRAIAEEGGTVRAINAKACAHFSRKDLDGLTEYAALFGAKGLAWVKMKADGEWQSPIAKFFSEEERASIAEALDAQEGDLLFFGADSEKVVFQVLGELRLEMARRLDLLDKKEFNFVWVTDFPLMEYDEKEDRYQSIHHPFTAPREEDLDLLETAPDKALSRAYDLVLNGTEIGGGSIRIHQRDVQARVLTALGIDKEEADEKFGFLLRALELGAPPHGGLAFGLDRLMMLITGSDSIRNVIAFPKTQKAACLLTEAPATVARKQLTELYLRPDWKE</sequence>